<accession>Q9SIK7</accession>
<accession>Q0IGK6</accession>
<keyword id="KW-0256">Endoplasmic reticulum</keyword>
<keyword id="KW-0333">Golgi apparatus</keyword>
<keyword id="KW-0472">Membrane</keyword>
<keyword id="KW-0914">Notch signaling pathway</keyword>
<keyword id="KW-1185">Reference proteome</keyword>
<keyword id="KW-0812">Transmembrane</keyword>
<keyword id="KW-1133">Transmembrane helix</keyword>
<dbReference type="EMBL" id="AC007113">
    <property type="protein sequence ID" value="AAD23630.1"/>
    <property type="molecule type" value="Genomic_DNA"/>
</dbReference>
<dbReference type="EMBL" id="CP002685">
    <property type="protein sequence ID" value="AEC08318.1"/>
    <property type="molecule type" value="Genomic_DNA"/>
</dbReference>
<dbReference type="EMBL" id="BT028914">
    <property type="protein sequence ID" value="ABI49461.1"/>
    <property type="molecule type" value="mRNA"/>
</dbReference>
<dbReference type="PIR" id="A84702">
    <property type="entry name" value="A84702"/>
</dbReference>
<dbReference type="RefSeq" id="NP_180551.1">
    <property type="nucleotide sequence ID" value="NM_128544.4"/>
</dbReference>
<dbReference type="SMR" id="Q9SIK7"/>
<dbReference type="BioGRID" id="2890">
    <property type="interactions" value="2"/>
</dbReference>
<dbReference type="FunCoup" id="Q9SIK7">
    <property type="interactions" value="3865"/>
</dbReference>
<dbReference type="STRING" id="3702.Q9SIK7"/>
<dbReference type="MEROPS" id="A22.A02"/>
<dbReference type="iPTMnet" id="Q9SIK7"/>
<dbReference type="PaxDb" id="3702-AT2G29900.1"/>
<dbReference type="ProteomicsDB" id="248759"/>
<dbReference type="EnsemblPlants" id="AT2G29900.1">
    <property type="protein sequence ID" value="AT2G29900.1"/>
    <property type="gene ID" value="AT2G29900"/>
</dbReference>
<dbReference type="GeneID" id="817540"/>
<dbReference type="Gramene" id="AT2G29900.1">
    <property type="protein sequence ID" value="AT2G29900.1"/>
    <property type="gene ID" value="AT2G29900"/>
</dbReference>
<dbReference type="KEGG" id="ath:AT2G29900"/>
<dbReference type="Araport" id="AT2G29900"/>
<dbReference type="TAIR" id="AT2G29900">
    <property type="gene designation" value="PS2"/>
</dbReference>
<dbReference type="eggNOG" id="KOG2736">
    <property type="taxonomic scope" value="Eukaryota"/>
</dbReference>
<dbReference type="HOGENOM" id="CLU_022975_2_0_1"/>
<dbReference type="InParanoid" id="Q9SIK7"/>
<dbReference type="OMA" id="NATCNQQ"/>
<dbReference type="PhylomeDB" id="Q9SIK7"/>
<dbReference type="PRO" id="PR:Q9SIK7"/>
<dbReference type="Proteomes" id="UP000006548">
    <property type="component" value="Chromosome 2"/>
</dbReference>
<dbReference type="ExpressionAtlas" id="Q9SIK7">
    <property type="expression patterns" value="baseline and differential"/>
</dbReference>
<dbReference type="GO" id="GO:0005789">
    <property type="term" value="C:endoplasmic reticulum membrane"/>
    <property type="evidence" value="ECO:0007669"/>
    <property type="project" value="UniProtKB-SubCell"/>
</dbReference>
<dbReference type="GO" id="GO:0000139">
    <property type="term" value="C:Golgi membrane"/>
    <property type="evidence" value="ECO:0007669"/>
    <property type="project" value="UniProtKB-SubCell"/>
</dbReference>
<dbReference type="GO" id="GO:0005798">
    <property type="term" value="C:Golgi-associated vesicle"/>
    <property type="evidence" value="ECO:0000314"/>
    <property type="project" value="TAIR"/>
</dbReference>
<dbReference type="GO" id="GO:0043231">
    <property type="term" value="C:intracellular membrane-bounded organelle"/>
    <property type="evidence" value="ECO:0000314"/>
    <property type="project" value="TAIR"/>
</dbReference>
<dbReference type="GO" id="GO:0042500">
    <property type="term" value="F:aspartic endopeptidase activity, intramembrane cleaving"/>
    <property type="evidence" value="ECO:0007669"/>
    <property type="project" value="InterPro"/>
</dbReference>
<dbReference type="GO" id="GO:0007219">
    <property type="term" value="P:Notch signaling pathway"/>
    <property type="evidence" value="ECO:0007669"/>
    <property type="project" value="UniProtKB-KW"/>
</dbReference>
<dbReference type="GO" id="GO:0016485">
    <property type="term" value="P:protein processing"/>
    <property type="evidence" value="ECO:0007669"/>
    <property type="project" value="InterPro"/>
</dbReference>
<dbReference type="FunFam" id="1.10.472.100:FF:000002">
    <property type="entry name" value="Presenilin"/>
    <property type="match status" value="1"/>
</dbReference>
<dbReference type="Gene3D" id="1.10.472.100">
    <property type="entry name" value="Presenilin"/>
    <property type="match status" value="1"/>
</dbReference>
<dbReference type="InterPro" id="IPR001108">
    <property type="entry name" value="Peptidase_A22A"/>
</dbReference>
<dbReference type="InterPro" id="IPR006639">
    <property type="entry name" value="Preselin/SPP"/>
</dbReference>
<dbReference type="InterPro" id="IPR042524">
    <property type="entry name" value="Presenilin_C"/>
</dbReference>
<dbReference type="PANTHER" id="PTHR10202">
    <property type="entry name" value="PRESENILIN"/>
    <property type="match status" value="1"/>
</dbReference>
<dbReference type="PANTHER" id="PTHR10202:SF13">
    <property type="entry name" value="PRESENILIN HOMOLOG"/>
    <property type="match status" value="1"/>
</dbReference>
<dbReference type="Pfam" id="PF01080">
    <property type="entry name" value="Presenilin"/>
    <property type="match status" value="2"/>
</dbReference>
<dbReference type="PRINTS" id="PR01072">
    <property type="entry name" value="PRESENILIN"/>
</dbReference>
<dbReference type="SMART" id="SM00730">
    <property type="entry name" value="PSN"/>
    <property type="match status" value="1"/>
</dbReference>
<protein>
    <recommendedName>
        <fullName>Presenilin-like protein At2g29900</fullName>
    </recommendedName>
</protein>
<name>PSNB_ARATH</name>
<feature type="chain" id="PRO_0000073906" description="Presenilin-like protein At2g29900">
    <location>
        <begin position="1"/>
        <end position="397"/>
    </location>
</feature>
<feature type="topological domain" description="Cytoplasmic" evidence="2">
    <location>
        <begin position="1"/>
        <end position="17"/>
    </location>
</feature>
<feature type="transmembrane region" description="Helical" evidence="2">
    <location>
        <begin position="18"/>
        <end position="38"/>
    </location>
</feature>
<feature type="topological domain" description="Lumenal" evidence="2">
    <location>
        <begin position="39"/>
        <end position="76"/>
    </location>
</feature>
<feature type="transmembrane region" description="Helical" evidence="2">
    <location>
        <begin position="77"/>
        <end position="97"/>
    </location>
</feature>
<feature type="topological domain" description="Cytoplasmic" evidence="2">
    <location>
        <begin position="98"/>
        <end position="106"/>
    </location>
</feature>
<feature type="transmembrane region" description="Helical" evidence="2">
    <location>
        <begin position="107"/>
        <end position="127"/>
    </location>
</feature>
<feature type="topological domain" description="Lumenal" evidence="2">
    <location>
        <begin position="128"/>
        <end position="135"/>
    </location>
</feature>
<feature type="transmembrane region" description="Helical" evidence="2">
    <location>
        <begin position="136"/>
        <end position="156"/>
    </location>
</feature>
<feature type="topological domain" description="Cytoplasmic" evidence="2">
    <location>
        <begin position="157"/>
        <end position="158"/>
    </location>
</feature>
<feature type="transmembrane region" description="Helical" evidence="2">
    <location>
        <begin position="159"/>
        <end position="179"/>
    </location>
</feature>
<feature type="topological domain" description="Lumenal" evidence="2">
    <location>
        <begin position="180"/>
        <end position="188"/>
    </location>
</feature>
<feature type="transmembrane region" description="Helical" evidence="2">
    <location>
        <begin position="189"/>
        <end position="209"/>
    </location>
</feature>
<feature type="topological domain" description="Cytoplasmic" evidence="2">
    <location>
        <begin position="210"/>
        <end position="305"/>
    </location>
</feature>
<feature type="transmembrane region" description="Helical" evidence="2">
    <location>
        <begin position="306"/>
        <end position="326"/>
    </location>
</feature>
<feature type="topological domain" description="Lumenal" evidence="2">
    <location>
        <begin position="327"/>
        <end position="336"/>
    </location>
</feature>
<feature type="transmembrane region" description="Helical" evidence="2">
    <location>
        <begin position="337"/>
        <end position="357"/>
    </location>
</feature>
<feature type="topological domain" description="Cytoplasmic" evidence="2">
    <location>
        <begin position="358"/>
        <end position="366"/>
    </location>
</feature>
<feature type="intramembrane region" description="Helical" evidence="2">
    <location>
        <begin position="367"/>
        <end position="387"/>
    </location>
</feature>
<feature type="topological domain" description="Cytoplasmic" evidence="2">
    <location>
        <begin position="388"/>
        <end position="397"/>
    </location>
</feature>
<feature type="short sequence motif" description="PAL">
    <location>
        <begin position="363"/>
        <end position="365"/>
    </location>
</feature>
<feature type="active site" evidence="1">
    <location>
        <position position="198"/>
    </location>
</feature>
<feature type="active site" evidence="1">
    <location>
        <position position="318"/>
    </location>
</feature>
<reference key="1">
    <citation type="journal article" date="1999" name="Nature">
        <title>Sequence and analysis of chromosome 2 of the plant Arabidopsis thaliana.</title>
        <authorList>
            <person name="Lin X."/>
            <person name="Kaul S."/>
            <person name="Rounsley S.D."/>
            <person name="Shea T.P."/>
            <person name="Benito M.-I."/>
            <person name="Town C.D."/>
            <person name="Fujii C.Y."/>
            <person name="Mason T.M."/>
            <person name="Bowman C.L."/>
            <person name="Barnstead M.E."/>
            <person name="Feldblyum T.V."/>
            <person name="Buell C.R."/>
            <person name="Ketchum K.A."/>
            <person name="Lee J.J."/>
            <person name="Ronning C.M."/>
            <person name="Koo H.L."/>
            <person name="Moffat K.S."/>
            <person name="Cronin L.A."/>
            <person name="Shen M."/>
            <person name="Pai G."/>
            <person name="Van Aken S."/>
            <person name="Umayam L."/>
            <person name="Tallon L.J."/>
            <person name="Gill J.E."/>
            <person name="Adams M.D."/>
            <person name="Carrera A.J."/>
            <person name="Creasy T.H."/>
            <person name="Goodman H.M."/>
            <person name="Somerville C.R."/>
            <person name="Copenhaver G.P."/>
            <person name="Preuss D."/>
            <person name="Nierman W.C."/>
            <person name="White O."/>
            <person name="Eisen J.A."/>
            <person name="Salzberg S.L."/>
            <person name="Fraser C.M."/>
            <person name="Venter J.C."/>
        </authorList>
    </citation>
    <scope>NUCLEOTIDE SEQUENCE [LARGE SCALE GENOMIC DNA]</scope>
    <source>
        <strain>cv. Columbia</strain>
    </source>
</reference>
<reference key="2">
    <citation type="journal article" date="2017" name="Plant J.">
        <title>Araport11: a complete reannotation of the Arabidopsis thaliana reference genome.</title>
        <authorList>
            <person name="Cheng C.Y."/>
            <person name="Krishnakumar V."/>
            <person name="Chan A.P."/>
            <person name="Thibaud-Nissen F."/>
            <person name="Schobel S."/>
            <person name="Town C.D."/>
        </authorList>
    </citation>
    <scope>GENOME REANNOTATION</scope>
    <source>
        <strain>cv. Columbia</strain>
    </source>
</reference>
<reference key="3">
    <citation type="submission" date="2006-09" db="EMBL/GenBank/DDBJ databases">
        <title>Arabidopsis ORF clones.</title>
        <authorList>
            <person name="Bautista V.R."/>
            <person name="Kim C.J."/>
            <person name="Chen H."/>
            <person name="Quinitio C."/>
            <person name="Ecker J.R."/>
        </authorList>
    </citation>
    <scope>NUCLEOTIDE SEQUENCE [LARGE SCALE MRNA]</scope>
    <source>
        <strain>cv. Columbia</strain>
    </source>
</reference>
<gene>
    <name type="ordered locus">At2g29900</name>
    <name type="ORF">F6K5.3</name>
</gene>
<organism>
    <name type="scientific">Arabidopsis thaliana</name>
    <name type="common">Mouse-ear cress</name>
    <dbReference type="NCBI Taxonomy" id="3702"/>
    <lineage>
        <taxon>Eukaryota</taxon>
        <taxon>Viridiplantae</taxon>
        <taxon>Streptophyta</taxon>
        <taxon>Embryophyta</taxon>
        <taxon>Tracheophyta</taxon>
        <taxon>Spermatophyta</taxon>
        <taxon>Magnoliopsida</taxon>
        <taxon>eudicotyledons</taxon>
        <taxon>Gunneridae</taxon>
        <taxon>Pentapetalae</taxon>
        <taxon>rosids</taxon>
        <taxon>malvids</taxon>
        <taxon>Brassicales</taxon>
        <taxon>Brassicaceae</taxon>
        <taxon>Camelineae</taxon>
        <taxon>Arabidopsis</taxon>
    </lineage>
</organism>
<comment type="function">
    <text evidence="1">Probable subunit of the gamma-secretase complex, an endoprotease complex that catalyzes the intramembrane cleavage of integral membrane proteins such as Notch receptors.</text>
</comment>
<comment type="subunit">
    <text evidence="1">Homodimer. Probable component of the gamma-secretase complex, a complex composed of a presenilin homodimer, nicastrin, APH1 and PEN2 (By similarity).</text>
</comment>
<comment type="subcellular location">
    <subcellularLocation>
        <location evidence="1">Endoplasmic reticulum membrane</location>
        <topology evidence="1">Multi-pass membrane protein</topology>
    </subcellularLocation>
    <subcellularLocation>
        <location evidence="1">Golgi apparatus membrane</location>
        <topology evidence="1">Multi-pass membrane protein</topology>
    </subcellularLocation>
</comment>
<comment type="domain">
    <text evidence="1">The PAL motif is required for normal active site conformation.</text>
</comment>
<comment type="similarity">
    <text evidence="3">Belongs to the peptidase A22A family.</text>
</comment>
<sequence>MDRNQRPRSILDSLGEELIAILTPVSICMFTVVLLVCILNSDPSSSSASFSSIATAAYSESDSDSSWDKFVGALLNSVVFVAAITVATFVLVLLFYLRCVKFLKFYMGFSAFIVLGNLGGEILVLLIDRFRFPIDSITFLILLFNFSVVGVFAVFMSKFSILITQGYLVWIGVLVAYFFTLLPEWTTWVLLVALALYDIAAVLLPVGPLRLLVEMAISRDEDIPALVYEARPVIRNDSRSVQRRVWREQRSSQNNANRNEVRVVESAEVEEEHVGSSERAEISVPLIDRRPEQAENSETFLEGIGLGSSGAIKLGLGDFIFYSVLVGRAAMYDLMTVYACYLAIIAGLGITLMLLSVYQKALPALPVSIMLGVVFYFLARLLLEVFVVQCSSNLVMF</sequence>
<proteinExistence type="evidence at transcript level"/>
<evidence type="ECO:0000250" key="1"/>
<evidence type="ECO:0000255" key="2"/>
<evidence type="ECO:0000305" key="3"/>